<protein>
    <recommendedName>
        <fullName evidence="1">tRNA modification GTPase MnmE</fullName>
        <ecNumber evidence="1">3.6.-.-</ecNumber>
    </recommendedName>
</protein>
<comment type="function">
    <text evidence="1">Exhibits a very high intrinsic GTPase hydrolysis rate. Involved in the addition of a carboxymethylaminomethyl (cmnm) group at the wobble position (U34) of certain tRNAs, forming tRNA-cmnm(5)s(2)U34.</text>
</comment>
<comment type="cofactor">
    <cofactor evidence="1">
        <name>K(+)</name>
        <dbReference type="ChEBI" id="CHEBI:29103"/>
    </cofactor>
    <text evidence="1">Binds 1 potassium ion per subunit.</text>
</comment>
<comment type="subunit">
    <text evidence="1">Homodimer. Heterotetramer of two MnmE and two MnmG subunits.</text>
</comment>
<comment type="subcellular location">
    <subcellularLocation>
        <location evidence="1">Cytoplasm</location>
    </subcellularLocation>
</comment>
<comment type="similarity">
    <text evidence="1">Belongs to the TRAFAC class TrmE-Era-EngA-EngB-Septin-like GTPase superfamily. TrmE GTPase family.</text>
</comment>
<accession>Q8CY34</accession>
<accession>G0K910</accession>
<dbReference type="EC" id="3.6.-.-" evidence="1"/>
<dbReference type="EMBL" id="AE014291">
    <property type="protein sequence ID" value="AAN30952.1"/>
    <property type="molecule type" value="Genomic_DNA"/>
</dbReference>
<dbReference type="EMBL" id="CP002997">
    <property type="protein sequence ID" value="AEM19369.1"/>
    <property type="molecule type" value="Genomic_DNA"/>
</dbReference>
<dbReference type="RefSeq" id="WP_004691148.1">
    <property type="nucleotide sequence ID" value="NZ_KN046804.1"/>
</dbReference>
<dbReference type="SMR" id="Q8CY34"/>
<dbReference type="GeneID" id="45052991"/>
<dbReference type="KEGG" id="bms:BR2062"/>
<dbReference type="KEGG" id="bsi:BS1330_I2056"/>
<dbReference type="PATRIC" id="fig|204722.22.peg.1955"/>
<dbReference type="HOGENOM" id="CLU_019624_3_1_5"/>
<dbReference type="PhylomeDB" id="Q8CY34"/>
<dbReference type="Proteomes" id="UP000007104">
    <property type="component" value="Chromosome I"/>
</dbReference>
<dbReference type="GO" id="GO:0005737">
    <property type="term" value="C:cytoplasm"/>
    <property type="evidence" value="ECO:0007669"/>
    <property type="project" value="UniProtKB-SubCell"/>
</dbReference>
<dbReference type="GO" id="GO:0005525">
    <property type="term" value="F:GTP binding"/>
    <property type="evidence" value="ECO:0007669"/>
    <property type="project" value="UniProtKB-UniRule"/>
</dbReference>
<dbReference type="GO" id="GO:0003924">
    <property type="term" value="F:GTPase activity"/>
    <property type="evidence" value="ECO:0007669"/>
    <property type="project" value="UniProtKB-UniRule"/>
</dbReference>
<dbReference type="GO" id="GO:0046872">
    <property type="term" value="F:metal ion binding"/>
    <property type="evidence" value="ECO:0007669"/>
    <property type="project" value="UniProtKB-KW"/>
</dbReference>
<dbReference type="GO" id="GO:0030488">
    <property type="term" value="P:tRNA methylation"/>
    <property type="evidence" value="ECO:0007669"/>
    <property type="project" value="TreeGrafter"/>
</dbReference>
<dbReference type="GO" id="GO:0002098">
    <property type="term" value="P:tRNA wobble uridine modification"/>
    <property type="evidence" value="ECO:0007669"/>
    <property type="project" value="TreeGrafter"/>
</dbReference>
<dbReference type="CDD" id="cd04164">
    <property type="entry name" value="trmE"/>
    <property type="match status" value="1"/>
</dbReference>
<dbReference type="CDD" id="cd14858">
    <property type="entry name" value="TrmE_N"/>
    <property type="match status" value="1"/>
</dbReference>
<dbReference type="FunFam" id="3.30.1360.120:FF:000007">
    <property type="entry name" value="tRNA modification GTPase GTPBP3, mitochondrial"/>
    <property type="match status" value="1"/>
</dbReference>
<dbReference type="Gene3D" id="3.40.50.300">
    <property type="entry name" value="P-loop containing nucleotide triphosphate hydrolases"/>
    <property type="match status" value="1"/>
</dbReference>
<dbReference type="Gene3D" id="3.30.1360.120">
    <property type="entry name" value="Probable tRNA modification gtpase trme, domain 1"/>
    <property type="match status" value="1"/>
</dbReference>
<dbReference type="Gene3D" id="1.20.120.430">
    <property type="entry name" value="tRNA modification GTPase MnmE domain 2"/>
    <property type="match status" value="1"/>
</dbReference>
<dbReference type="HAMAP" id="MF_00379">
    <property type="entry name" value="GTPase_MnmE"/>
    <property type="match status" value="1"/>
</dbReference>
<dbReference type="InterPro" id="IPR031168">
    <property type="entry name" value="G_TrmE"/>
</dbReference>
<dbReference type="InterPro" id="IPR006073">
    <property type="entry name" value="GTP-bd"/>
</dbReference>
<dbReference type="InterPro" id="IPR018948">
    <property type="entry name" value="GTP-bd_TrmE_N"/>
</dbReference>
<dbReference type="InterPro" id="IPR004520">
    <property type="entry name" value="GTPase_MnmE"/>
</dbReference>
<dbReference type="InterPro" id="IPR027368">
    <property type="entry name" value="MnmE_dom2"/>
</dbReference>
<dbReference type="InterPro" id="IPR025867">
    <property type="entry name" value="MnmE_helical"/>
</dbReference>
<dbReference type="InterPro" id="IPR027417">
    <property type="entry name" value="P-loop_NTPase"/>
</dbReference>
<dbReference type="InterPro" id="IPR005225">
    <property type="entry name" value="Small_GTP-bd"/>
</dbReference>
<dbReference type="InterPro" id="IPR027266">
    <property type="entry name" value="TrmE/GcvT_dom1"/>
</dbReference>
<dbReference type="NCBIfam" id="TIGR00450">
    <property type="entry name" value="mnmE_trmE_thdF"/>
    <property type="match status" value="1"/>
</dbReference>
<dbReference type="NCBIfam" id="NF003661">
    <property type="entry name" value="PRK05291.1-3"/>
    <property type="match status" value="1"/>
</dbReference>
<dbReference type="NCBIfam" id="TIGR00231">
    <property type="entry name" value="small_GTP"/>
    <property type="match status" value="1"/>
</dbReference>
<dbReference type="PANTHER" id="PTHR42714">
    <property type="entry name" value="TRNA MODIFICATION GTPASE GTPBP3"/>
    <property type="match status" value="1"/>
</dbReference>
<dbReference type="PANTHER" id="PTHR42714:SF2">
    <property type="entry name" value="TRNA MODIFICATION GTPASE GTPBP3, MITOCHONDRIAL"/>
    <property type="match status" value="1"/>
</dbReference>
<dbReference type="Pfam" id="PF01926">
    <property type="entry name" value="MMR_HSR1"/>
    <property type="match status" value="1"/>
</dbReference>
<dbReference type="Pfam" id="PF12631">
    <property type="entry name" value="MnmE_helical"/>
    <property type="match status" value="1"/>
</dbReference>
<dbReference type="Pfam" id="PF10396">
    <property type="entry name" value="TrmE_N"/>
    <property type="match status" value="1"/>
</dbReference>
<dbReference type="SUPFAM" id="SSF52540">
    <property type="entry name" value="P-loop containing nucleoside triphosphate hydrolases"/>
    <property type="match status" value="1"/>
</dbReference>
<dbReference type="SUPFAM" id="SSF116878">
    <property type="entry name" value="TrmE connector domain"/>
    <property type="match status" value="1"/>
</dbReference>
<dbReference type="PROSITE" id="PS51709">
    <property type="entry name" value="G_TRME"/>
    <property type="match status" value="1"/>
</dbReference>
<feature type="chain" id="PRO_0000345732" description="tRNA modification GTPase MnmE">
    <location>
        <begin position="1"/>
        <end position="442"/>
    </location>
</feature>
<feature type="domain" description="TrmE-type G">
    <location>
        <begin position="221"/>
        <end position="366"/>
    </location>
</feature>
<feature type="binding site" evidence="1">
    <location>
        <position position="27"/>
    </location>
    <ligand>
        <name>(6S)-5-formyl-5,6,7,8-tetrahydrofolate</name>
        <dbReference type="ChEBI" id="CHEBI:57457"/>
    </ligand>
</feature>
<feature type="binding site" evidence="1">
    <location>
        <position position="84"/>
    </location>
    <ligand>
        <name>(6S)-5-formyl-5,6,7,8-tetrahydrofolate</name>
        <dbReference type="ChEBI" id="CHEBI:57457"/>
    </ligand>
</feature>
<feature type="binding site" evidence="1">
    <location>
        <position position="124"/>
    </location>
    <ligand>
        <name>(6S)-5-formyl-5,6,7,8-tetrahydrofolate</name>
        <dbReference type="ChEBI" id="CHEBI:57457"/>
    </ligand>
</feature>
<feature type="binding site" evidence="1">
    <location>
        <begin position="231"/>
        <end position="236"/>
    </location>
    <ligand>
        <name>GTP</name>
        <dbReference type="ChEBI" id="CHEBI:37565"/>
    </ligand>
</feature>
<feature type="binding site" evidence="1">
    <location>
        <position position="235"/>
    </location>
    <ligand>
        <name>Mg(2+)</name>
        <dbReference type="ChEBI" id="CHEBI:18420"/>
    </ligand>
</feature>
<feature type="binding site" evidence="1">
    <location>
        <begin position="250"/>
        <end position="256"/>
    </location>
    <ligand>
        <name>GTP</name>
        <dbReference type="ChEBI" id="CHEBI:37565"/>
    </ligand>
</feature>
<feature type="binding site" evidence="1">
    <location>
        <position position="256"/>
    </location>
    <ligand>
        <name>Mg(2+)</name>
        <dbReference type="ChEBI" id="CHEBI:18420"/>
    </ligand>
</feature>
<feature type="binding site" evidence="1">
    <location>
        <begin position="275"/>
        <end position="278"/>
    </location>
    <ligand>
        <name>GTP</name>
        <dbReference type="ChEBI" id="CHEBI:37565"/>
    </ligand>
</feature>
<feature type="binding site" evidence="1">
    <location>
        <position position="442"/>
    </location>
    <ligand>
        <name>(6S)-5-formyl-5,6,7,8-tetrahydrofolate</name>
        <dbReference type="ChEBI" id="CHEBI:57457"/>
    </ligand>
</feature>
<sequence>MSEIGSYHDTIFALSSGRLPSGVAVIRISGPKTRFVYETICQAIPEPRHAALLTFRSRNGDAIDRGLTLFFPAPHSFTGEDCAEFHLHGGKAVVEKMLAVLGELPGCRIAEAGEFTRRAFANGKMDLTIAEGLADLIAAETEGQRRLAMQVASGNQRKLYSEWRQRLINARAFIEAELDFADESDVPGSVSMQVWQQLSALKHEIEHHIASGKRAAMLRDGLHVVIVGAPNAGKSSLLNFLAGRDVAIISKEAGTTRDLLEVKLDLGGIPVYVTDTAGLRETDSVVEKIGIERARARMAEADLVLSLEDMSGPVSVTVEKIEAETWLIGTKADLGGSASGLWKYHISTMTGSGLEQLLDALQAFAEAKIGQIEDAVPTRQRHINLLRATIEEIEKAIEGDDLPLELRAENMRLASQFLGRITGDVDVEEILDVIFSQFCIGK</sequence>
<gene>
    <name evidence="1" type="primary">mnmE</name>
    <name evidence="1" type="synonym">trmE</name>
    <name type="ordered locus">BR2062</name>
    <name type="ordered locus">BS1330_I2056</name>
</gene>
<keyword id="KW-0963">Cytoplasm</keyword>
<keyword id="KW-0342">GTP-binding</keyword>
<keyword id="KW-0378">Hydrolase</keyword>
<keyword id="KW-0460">Magnesium</keyword>
<keyword id="KW-0479">Metal-binding</keyword>
<keyword id="KW-0547">Nucleotide-binding</keyword>
<keyword id="KW-0630">Potassium</keyword>
<keyword id="KW-0819">tRNA processing</keyword>
<organism>
    <name type="scientific">Brucella suis biovar 1 (strain 1330)</name>
    <dbReference type="NCBI Taxonomy" id="204722"/>
    <lineage>
        <taxon>Bacteria</taxon>
        <taxon>Pseudomonadati</taxon>
        <taxon>Pseudomonadota</taxon>
        <taxon>Alphaproteobacteria</taxon>
        <taxon>Hyphomicrobiales</taxon>
        <taxon>Brucellaceae</taxon>
        <taxon>Brucella/Ochrobactrum group</taxon>
        <taxon>Brucella</taxon>
    </lineage>
</organism>
<evidence type="ECO:0000255" key="1">
    <source>
        <dbReference type="HAMAP-Rule" id="MF_00379"/>
    </source>
</evidence>
<name>MNME_BRUSU</name>
<reference key="1">
    <citation type="journal article" date="2002" name="Proc. Natl. Acad. Sci. U.S.A.">
        <title>The Brucella suis genome reveals fundamental similarities between animal and plant pathogens and symbionts.</title>
        <authorList>
            <person name="Paulsen I.T."/>
            <person name="Seshadri R."/>
            <person name="Nelson K.E."/>
            <person name="Eisen J.A."/>
            <person name="Heidelberg J.F."/>
            <person name="Read T.D."/>
            <person name="Dodson R.J."/>
            <person name="Umayam L.A."/>
            <person name="Brinkac L.M."/>
            <person name="Beanan M.J."/>
            <person name="Daugherty S.C."/>
            <person name="DeBoy R.T."/>
            <person name="Durkin A.S."/>
            <person name="Kolonay J.F."/>
            <person name="Madupu R."/>
            <person name="Nelson W.C."/>
            <person name="Ayodeji B."/>
            <person name="Kraul M."/>
            <person name="Shetty J."/>
            <person name="Malek J.A."/>
            <person name="Van Aken S.E."/>
            <person name="Riedmuller S."/>
            <person name="Tettelin H."/>
            <person name="Gill S.R."/>
            <person name="White O."/>
            <person name="Salzberg S.L."/>
            <person name="Hoover D.L."/>
            <person name="Lindler L.E."/>
            <person name="Halling S.M."/>
            <person name="Boyle S.M."/>
            <person name="Fraser C.M."/>
        </authorList>
    </citation>
    <scope>NUCLEOTIDE SEQUENCE [LARGE SCALE GENOMIC DNA]</scope>
    <source>
        <strain>1330</strain>
    </source>
</reference>
<reference key="2">
    <citation type="journal article" date="2011" name="J. Bacteriol.">
        <title>Revised genome sequence of Brucella suis 1330.</title>
        <authorList>
            <person name="Tae H."/>
            <person name="Shallom S."/>
            <person name="Settlage R."/>
            <person name="Preston D."/>
            <person name="Adams L.G."/>
            <person name="Garner H.R."/>
        </authorList>
    </citation>
    <scope>NUCLEOTIDE SEQUENCE [LARGE SCALE GENOMIC DNA]</scope>
    <source>
        <strain>1330</strain>
    </source>
</reference>
<proteinExistence type="inferred from homology"/>